<organism>
    <name type="scientific">Pseudomonas aeruginosa (strain ATCC 15692 / DSM 22644 / CIP 104116 / JCM 14847 / LMG 12228 / 1C / PRS 101 / PAO1)</name>
    <dbReference type="NCBI Taxonomy" id="208964"/>
    <lineage>
        <taxon>Bacteria</taxon>
        <taxon>Pseudomonadati</taxon>
        <taxon>Pseudomonadota</taxon>
        <taxon>Gammaproteobacteria</taxon>
        <taxon>Pseudomonadales</taxon>
        <taxon>Pseudomonadaceae</taxon>
        <taxon>Pseudomonas</taxon>
    </lineage>
</organism>
<sequence>MIGRLRGTLAEKQPPHLILDVNGVGYEVEVPMTTLYRLPSVGEPVTLHTHLVVREDAHLLYGFAEKRERELFRELIRLNGVGPKLALALMSGLEVDELVRCVQAQDTSTLVKIPGVGKKTAERLLVELKDRFKAWENMPTIAPLVMEPRASATVSSAEADAVSALIALGFKPQEASRAVAAVPGEDLSSEEMIRQALKGMV</sequence>
<keyword id="KW-0002">3D-structure</keyword>
<keyword id="KW-0963">Cytoplasm</keyword>
<keyword id="KW-0227">DNA damage</keyword>
<keyword id="KW-0233">DNA recombination</keyword>
<keyword id="KW-0234">DNA repair</keyword>
<keyword id="KW-0238">DNA-binding</keyword>
<keyword id="KW-1185">Reference proteome</keyword>
<dbReference type="EMBL" id="D83138">
    <property type="protein sequence ID" value="BAA11818.1"/>
    <property type="molecule type" value="Genomic_DNA"/>
</dbReference>
<dbReference type="EMBL" id="AE004091">
    <property type="protein sequence ID" value="AAG04355.1"/>
    <property type="molecule type" value="Genomic_DNA"/>
</dbReference>
<dbReference type="PIR" id="JC5476">
    <property type="entry name" value="JC5476"/>
</dbReference>
<dbReference type="RefSeq" id="NP_249657.1">
    <property type="nucleotide sequence ID" value="NC_002516.2"/>
</dbReference>
<dbReference type="RefSeq" id="WP_003086122.1">
    <property type="nucleotide sequence ID" value="NZ_QZGE01000007.1"/>
</dbReference>
<dbReference type="PDB" id="7X5A">
    <property type="method" value="EM"/>
    <property type="resolution" value="3.01 A"/>
    <property type="chains" value="A/B/C/D/E/F/G/H=1-137"/>
</dbReference>
<dbReference type="PDB" id="7X7P">
    <property type="method" value="EM"/>
    <property type="resolution" value="7.02 A"/>
    <property type="chains" value="A/B/C/D=154-201"/>
</dbReference>
<dbReference type="PDB" id="7X7Q">
    <property type="method" value="EM"/>
    <property type="resolution" value="7.02 A"/>
    <property type="chains" value="A/B/C/D/E/F/G/H=1-201"/>
</dbReference>
<dbReference type="PDBsum" id="7X5A"/>
<dbReference type="PDBsum" id="7X7P"/>
<dbReference type="PDBsum" id="7X7Q"/>
<dbReference type="EMDB" id="EMD-33013"/>
<dbReference type="EMDB" id="EMD-33043"/>
<dbReference type="EMDB" id="EMD-33044"/>
<dbReference type="SMR" id="Q51425"/>
<dbReference type="FunCoup" id="Q51425">
    <property type="interactions" value="292"/>
</dbReference>
<dbReference type="STRING" id="208964.PA0966"/>
<dbReference type="PaxDb" id="208964-PA0966"/>
<dbReference type="DNASU" id="879609"/>
<dbReference type="GeneID" id="77222451"/>
<dbReference type="GeneID" id="879609"/>
<dbReference type="KEGG" id="pae:PA0966"/>
<dbReference type="PATRIC" id="fig|208964.12.peg.1004"/>
<dbReference type="PseudoCAP" id="PA0966"/>
<dbReference type="HOGENOM" id="CLU_087936_0_0_6"/>
<dbReference type="InParanoid" id="Q51425"/>
<dbReference type="OrthoDB" id="5293449at2"/>
<dbReference type="PhylomeDB" id="Q51425"/>
<dbReference type="BioCyc" id="PAER208964:G1FZ6-987-MONOMER"/>
<dbReference type="Proteomes" id="UP000002438">
    <property type="component" value="Chromosome"/>
</dbReference>
<dbReference type="GO" id="GO:0005737">
    <property type="term" value="C:cytoplasm"/>
    <property type="evidence" value="ECO:0007669"/>
    <property type="project" value="UniProtKB-SubCell"/>
</dbReference>
<dbReference type="GO" id="GO:0009379">
    <property type="term" value="C:Holliday junction helicase complex"/>
    <property type="evidence" value="ECO:0007669"/>
    <property type="project" value="InterPro"/>
</dbReference>
<dbReference type="GO" id="GO:0048476">
    <property type="term" value="C:Holliday junction resolvase complex"/>
    <property type="evidence" value="ECO:0007669"/>
    <property type="project" value="UniProtKB-UniRule"/>
</dbReference>
<dbReference type="GO" id="GO:0005524">
    <property type="term" value="F:ATP binding"/>
    <property type="evidence" value="ECO:0007669"/>
    <property type="project" value="InterPro"/>
</dbReference>
<dbReference type="GO" id="GO:0000400">
    <property type="term" value="F:four-way junction DNA binding"/>
    <property type="evidence" value="ECO:0007669"/>
    <property type="project" value="UniProtKB-UniRule"/>
</dbReference>
<dbReference type="GO" id="GO:0009378">
    <property type="term" value="F:four-way junction helicase activity"/>
    <property type="evidence" value="ECO:0000318"/>
    <property type="project" value="GO_Central"/>
</dbReference>
<dbReference type="GO" id="GO:0006310">
    <property type="term" value="P:DNA recombination"/>
    <property type="evidence" value="ECO:0007669"/>
    <property type="project" value="UniProtKB-UniRule"/>
</dbReference>
<dbReference type="GO" id="GO:0006281">
    <property type="term" value="P:DNA repair"/>
    <property type="evidence" value="ECO:0007669"/>
    <property type="project" value="UniProtKB-UniRule"/>
</dbReference>
<dbReference type="GO" id="GO:0009432">
    <property type="term" value="P:SOS response"/>
    <property type="evidence" value="ECO:0000318"/>
    <property type="project" value="GO_Central"/>
</dbReference>
<dbReference type="CDD" id="cd14332">
    <property type="entry name" value="UBA_RuvA_C"/>
    <property type="match status" value="1"/>
</dbReference>
<dbReference type="Gene3D" id="1.10.150.20">
    <property type="entry name" value="5' to 3' exonuclease, C-terminal subdomain"/>
    <property type="match status" value="1"/>
</dbReference>
<dbReference type="Gene3D" id="1.10.8.10">
    <property type="entry name" value="DNA helicase RuvA subunit, C-terminal domain"/>
    <property type="match status" value="1"/>
</dbReference>
<dbReference type="Gene3D" id="2.40.50.140">
    <property type="entry name" value="Nucleic acid-binding proteins"/>
    <property type="match status" value="1"/>
</dbReference>
<dbReference type="HAMAP" id="MF_00031">
    <property type="entry name" value="DNA_HJ_migration_RuvA"/>
    <property type="match status" value="1"/>
</dbReference>
<dbReference type="InterPro" id="IPR013849">
    <property type="entry name" value="DNA_helicase_Holl-junc_RuvA_I"/>
</dbReference>
<dbReference type="InterPro" id="IPR003583">
    <property type="entry name" value="Hlx-hairpin-Hlx_DNA-bd_motif"/>
</dbReference>
<dbReference type="InterPro" id="IPR012340">
    <property type="entry name" value="NA-bd_OB-fold"/>
</dbReference>
<dbReference type="InterPro" id="IPR000085">
    <property type="entry name" value="RuvA"/>
</dbReference>
<dbReference type="InterPro" id="IPR010994">
    <property type="entry name" value="RuvA_2-like"/>
</dbReference>
<dbReference type="InterPro" id="IPR011114">
    <property type="entry name" value="RuvA_C"/>
</dbReference>
<dbReference type="InterPro" id="IPR036267">
    <property type="entry name" value="RuvA_C_sf"/>
</dbReference>
<dbReference type="NCBIfam" id="TIGR00084">
    <property type="entry name" value="ruvA"/>
    <property type="match status" value="1"/>
</dbReference>
<dbReference type="Pfam" id="PF14520">
    <property type="entry name" value="HHH_5"/>
    <property type="match status" value="1"/>
</dbReference>
<dbReference type="Pfam" id="PF07499">
    <property type="entry name" value="RuvA_C"/>
    <property type="match status" value="1"/>
</dbReference>
<dbReference type="Pfam" id="PF01330">
    <property type="entry name" value="RuvA_N"/>
    <property type="match status" value="1"/>
</dbReference>
<dbReference type="SMART" id="SM00278">
    <property type="entry name" value="HhH1"/>
    <property type="match status" value="2"/>
</dbReference>
<dbReference type="SUPFAM" id="SSF46929">
    <property type="entry name" value="DNA helicase RuvA subunit, C-terminal domain"/>
    <property type="match status" value="1"/>
</dbReference>
<dbReference type="SUPFAM" id="SSF50249">
    <property type="entry name" value="Nucleic acid-binding proteins"/>
    <property type="match status" value="1"/>
</dbReference>
<dbReference type="SUPFAM" id="SSF47781">
    <property type="entry name" value="RuvA domain 2-like"/>
    <property type="match status" value="1"/>
</dbReference>
<accession>Q51425</accession>
<feature type="chain" id="PRO_0000094665" description="Holliday junction branch migration complex subunit RuvA">
    <location>
        <begin position="1"/>
        <end position="201"/>
    </location>
</feature>
<feature type="region of interest" description="Domain I" evidence="1">
    <location>
        <begin position="1"/>
        <end position="64"/>
    </location>
</feature>
<feature type="region of interest" description="Domain II" evidence="1">
    <location>
        <begin position="65"/>
        <end position="143"/>
    </location>
</feature>
<feature type="region of interest" description="Flexible linker" evidence="1">
    <location>
        <begin position="144"/>
        <end position="152"/>
    </location>
</feature>
<feature type="region of interest" description="Domain III" evidence="1">
    <location>
        <begin position="153"/>
        <end position="201"/>
    </location>
</feature>
<reference key="1">
    <citation type="journal article" date="1996" name="Gene">
        <title>Molecular analysis of the Pseudomonas aeruginosa genes, ruvA, ruvB and ruvC, involved in processing of homologous recombination intermediates.</title>
        <authorList>
            <person name="Hishida T."/>
            <person name="Iwasaki H."/>
            <person name="Ishioka K."/>
            <person name="Shinagawa H."/>
        </authorList>
    </citation>
    <scope>NUCLEOTIDE SEQUENCE [GENOMIC DNA]</scope>
    <scope>FUNCTION</scope>
    <scope>PROBABLY NOT SOS REGULATED</scope>
    <source>
        <strain>ATCC 15692 / DSM 22644 / CIP 104116 / JCM 14847 / LMG 12228 / 1C / PRS 101 / PAO1</strain>
    </source>
</reference>
<reference key="2">
    <citation type="journal article" date="2000" name="Nature">
        <title>Complete genome sequence of Pseudomonas aeruginosa PAO1, an opportunistic pathogen.</title>
        <authorList>
            <person name="Stover C.K."/>
            <person name="Pham X.-Q.T."/>
            <person name="Erwin A.L."/>
            <person name="Mizoguchi S.D."/>
            <person name="Warrener P."/>
            <person name="Hickey M.J."/>
            <person name="Brinkman F.S.L."/>
            <person name="Hufnagle W.O."/>
            <person name="Kowalik D.J."/>
            <person name="Lagrou M."/>
            <person name="Garber R.L."/>
            <person name="Goltry L."/>
            <person name="Tolentino E."/>
            <person name="Westbrock-Wadman S."/>
            <person name="Yuan Y."/>
            <person name="Brody L.L."/>
            <person name="Coulter S.N."/>
            <person name="Folger K.R."/>
            <person name="Kas A."/>
            <person name="Larbig K."/>
            <person name="Lim R.M."/>
            <person name="Smith K.A."/>
            <person name="Spencer D.H."/>
            <person name="Wong G.K.-S."/>
            <person name="Wu Z."/>
            <person name="Paulsen I.T."/>
            <person name="Reizer J."/>
            <person name="Saier M.H. Jr."/>
            <person name="Hancock R.E.W."/>
            <person name="Lory S."/>
            <person name="Olson M.V."/>
        </authorList>
    </citation>
    <scope>NUCLEOTIDE SEQUENCE [LARGE SCALE GENOMIC DNA]</scope>
    <source>
        <strain>ATCC 15692 / DSM 22644 / CIP 104116 / JCM 14847 / LMG 12228 / 1C / PRS 101 / PAO1</strain>
    </source>
</reference>
<gene>
    <name evidence="1 3" type="primary">ruvA</name>
    <name type="ordered locus">PA0966</name>
</gene>
<evidence type="ECO:0000255" key="1">
    <source>
        <dbReference type="HAMAP-Rule" id="MF_00031"/>
    </source>
</evidence>
<evidence type="ECO:0000269" key="2">
    <source>
    </source>
</evidence>
<evidence type="ECO:0000303" key="3">
    <source>
    </source>
</evidence>
<comment type="function">
    <text evidence="1 2">The RuvA-RuvB-RuvC complex processes Holliday junction (HJ) DNA during genetic recombination and DNA repair, while the RuvA-RuvB complex plays an important role in the rescue of blocked DNA replication forks via replication fork reversal (RFR). RuvA specifically binds to HJ cruciform DNA, conferring on it an open structure. The RuvB hexamer acts as an ATP-dependent pump, pulling dsDNA into and through the RuvAB complex. HJ branch migration allows RuvC to scan DNA until it finds its consensus sequence, where it cleaves and resolves the cruciform DNA (By similarity). Complements an E.coli deletion mutant (PubMed:8982068).</text>
</comment>
<comment type="subunit">
    <text evidence="1">Homotetramer. Forms an RuvA(8)-RuvB(12)-Holliday junction (HJ) complex. HJ DNA is sandwiched between 2 RuvA tetramers; dsDNA enters through RuvA and exits via RuvB. An RuvB hexamer assembles on each DNA strand where it exits the tetramer. Each RuvB hexamer is contacted by two RuvA subunits (via domain III) on 2 adjacent RuvB subunits; this complex drives branch migration. In the full resolvosome a probable DNA-RuvA(4)-RuvB(12)-RuvC(2) complex forms which resolves the HJ.</text>
</comment>
<comment type="subcellular location">
    <subcellularLocation>
        <location evidence="1">Cytoplasm</location>
    </subcellularLocation>
</comment>
<comment type="domain">
    <text evidence="1">Has three domains with a flexible linker between the domains II and III and assumes an 'L' shape. Domain III is highly mobile and contacts RuvB.</text>
</comment>
<comment type="miscellaneous">
    <text evidence="2">Probably part of a ruvC-ruvA-ruvB operon. Does not seem to belong to the SOS regulon, no LexA binding site has been identified in the promoter region.</text>
</comment>
<comment type="similarity">
    <text evidence="1">Belongs to the RuvA family.</text>
</comment>
<protein>
    <recommendedName>
        <fullName evidence="1">Holliday junction branch migration complex subunit RuvA</fullName>
    </recommendedName>
</protein>
<name>RUVA_PSEAE</name>
<proteinExistence type="evidence at protein level"/>